<accession>Q9LDD8</accession>
<accession>O49501</accession>
<accession>Q94F35</accession>
<evidence type="ECO:0000250" key="1"/>
<evidence type="ECO:0000255" key="2"/>
<evidence type="ECO:0000255" key="3">
    <source>
        <dbReference type="PROSITE-ProRule" id="PRU01136"/>
    </source>
</evidence>
<evidence type="ECO:0000255" key="4">
    <source>
        <dbReference type="PROSITE-ProRule" id="PRU01137"/>
    </source>
</evidence>
<evidence type="ECO:0000255" key="5">
    <source>
        <dbReference type="PROSITE-ProRule" id="PRU01138"/>
    </source>
</evidence>
<evidence type="ECO:0000305" key="6"/>
<keyword id="KW-0067">ATP-binding</keyword>
<keyword id="KW-0436">Ligase</keyword>
<keyword id="KW-0496">Mitochondrion</keyword>
<keyword id="KW-0547">Nucleotide-binding</keyword>
<keyword id="KW-1185">Reference proteome</keyword>
<keyword id="KW-0809">Transit peptide</keyword>
<protein>
    <recommendedName>
        <fullName>Methylcrotonoyl-CoA carboxylase beta chain, mitochondrial</fullName>
        <shortName>MCCase subunit beta</shortName>
        <ecNumber>6.4.1.4</ecNumber>
    </recommendedName>
    <alternativeName>
        <fullName>3-methylcrotonyl-CoA carboxylase 2</fullName>
    </alternativeName>
    <alternativeName>
        <fullName>3-methylcrotonyl-CoA:carbon dioxide ligase subunit beta</fullName>
    </alternativeName>
</protein>
<sequence>MLRILGRRVVSASKELTSIQQWRIRPGTDSRPDPFRTFRGLQKGFCVGILPDGVDRNSEAFSSNSIAMEGILSELRSHIKKVLAGGGEEAVKRNRSRNKLLPRERIDRLLDPGSSFLELSQLAGHELYEEPLPSGGIITGIGPIHGRICMFMANDPTVKGGTYYPITIKKHLRAQEIAARCRLPCIYLVDSGGAYLPKQAEVFPDKENFGRVFYNESVMSSDGIPQIAIVLGSCTAGGAYIPAMADESVMVKGNGTIFLAGPPLVKAATGEEVSAEDLGGATVHCTVSGVSDYFAQDELHGLAIGRNIVKNLHMAAKQGMEGTFGSKNLVYKEPLYDINELRSIAPVDHKQQFDVRSIIARIVDGSEFDEFKKQYGTTLVTGFARIYGQTVGIIGNNGILFNESALKGAHFIELCSQRKIPLVFLQNITGFMVGSRAEANGIAKAGAKMVMAVSCAKVPKITIITGASFGAGNYAMCGRAYSPDFMFIWPNARIGIMGGAQAAGVLTQIERATKKRQGIKWTEEEEEAFKKKTVDAYEREANPYYSTARLWDDGVIDPCDTRKVLGLCLSAALNRPLEDTRFGVFRM</sequence>
<dbReference type="EC" id="6.4.1.4"/>
<dbReference type="EMBL" id="AF059511">
    <property type="protein sequence ID" value="AAF35259.1"/>
    <property type="molecule type" value="Genomic_DNA"/>
</dbReference>
<dbReference type="EMBL" id="AF059510">
    <property type="protein sequence ID" value="AAF35258.1"/>
    <property type="molecule type" value="mRNA"/>
</dbReference>
<dbReference type="EMBL" id="AL021961">
    <property type="protein sequence ID" value="CAA17569.1"/>
    <property type="status" value="ALT_SEQ"/>
    <property type="molecule type" value="Genomic_DNA"/>
</dbReference>
<dbReference type="EMBL" id="AL031032">
    <property type="protein sequence ID" value="CAA19885.1"/>
    <property type="status" value="ALT_SEQ"/>
    <property type="molecule type" value="Genomic_DNA"/>
</dbReference>
<dbReference type="EMBL" id="AL161584">
    <property type="protein sequence ID" value="CAB80120.1"/>
    <property type="status" value="ALT_SEQ"/>
    <property type="molecule type" value="Genomic_DNA"/>
</dbReference>
<dbReference type="EMBL" id="CP002687">
    <property type="protein sequence ID" value="AEE86312.1"/>
    <property type="molecule type" value="Genomic_DNA"/>
</dbReference>
<dbReference type="EMBL" id="AF386926">
    <property type="protein sequence ID" value="AAK62371.1"/>
    <property type="molecule type" value="mRNA"/>
</dbReference>
<dbReference type="EMBL" id="BT000384">
    <property type="protein sequence ID" value="AAN15703.1"/>
    <property type="molecule type" value="mRNA"/>
</dbReference>
<dbReference type="RefSeq" id="NP_567950.1">
    <property type="nucleotide sequence ID" value="NM_119564.5"/>
</dbReference>
<dbReference type="SMR" id="Q9LDD8"/>
<dbReference type="BioGRID" id="14831">
    <property type="interactions" value="3"/>
</dbReference>
<dbReference type="FunCoup" id="Q9LDD8">
    <property type="interactions" value="3092"/>
</dbReference>
<dbReference type="IntAct" id="Q9LDD8">
    <property type="interactions" value="1"/>
</dbReference>
<dbReference type="STRING" id="3702.Q9LDD8"/>
<dbReference type="PaxDb" id="3702-AT4G34030.1"/>
<dbReference type="ProteomicsDB" id="238373"/>
<dbReference type="EnsemblPlants" id="AT4G34030.1">
    <property type="protein sequence ID" value="AT4G34030.1"/>
    <property type="gene ID" value="AT4G34030"/>
</dbReference>
<dbReference type="GeneID" id="829549"/>
<dbReference type="Gramene" id="AT4G34030.1">
    <property type="protein sequence ID" value="AT4G34030.1"/>
    <property type="gene ID" value="AT4G34030"/>
</dbReference>
<dbReference type="KEGG" id="ath:AT4G34030"/>
<dbReference type="Araport" id="AT4G34030"/>
<dbReference type="TAIR" id="AT4G34030">
    <property type="gene designation" value="MCCB"/>
</dbReference>
<dbReference type="eggNOG" id="KOG0540">
    <property type="taxonomic scope" value="Eukaryota"/>
</dbReference>
<dbReference type="HOGENOM" id="CLU_018822_0_1_1"/>
<dbReference type="InParanoid" id="Q9LDD8"/>
<dbReference type="OMA" id="GATTHCE"/>
<dbReference type="OrthoDB" id="439921at2759"/>
<dbReference type="PhylomeDB" id="Q9LDD8"/>
<dbReference type="BioCyc" id="ARA:AT4G34030-MONOMER"/>
<dbReference type="BRENDA" id="6.4.1.4">
    <property type="organism ID" value="399"/>
</dbReference>
<dbReference type="UniPathway" id="UPA00363">
    <property type="reaction ID" value="UER00861"/>
</dbReference>
<dbReference type="PRO" id="PR:Q9LDD8"/>
<dbReference type="Proteomes" id="UP000006548">
    <property type="component" value="Chromosome 4"/>
</dbReference>
<dbReference type="ExpressionAtlas" id="Q9LDD8">
    <property type="expression patterns" value="baseline and differential"/>
</dbReference>
<dbReference type="GO" id="GO:0005759">
    <property type="term" value="C:mitochondrial matrix"/>
    <property type="evidence" value="ECO:0007669"/>
    <property type="project" value="UniProtKB-SubCell"/>
</dbReference>
<dbReference type="GO" id="GO:0005739">
    <property type="term" value="C:mitochondrion"/>
    <property type="evidence" value="ECO:0000314"/>
    <property type="project" value="TAIR"/>
</dbReference>
<dbReference type="GO" id="GO:0005886">
    <property type="term" value="C:plasma membrane"/>
    <property type="evidence" value="ECO:0007005"/>
    <property type="project" value="TAIR"/>
</dbReference>
<dbReference type="GO" id="GO:0005524">
    <property type="term" value="F:ATP binding"/>
    <property type="evidence" value="ECO:0007669"/>
    <property type="project" value="UniProtKB-KW"/>
</dbReference>
<dbReference type="GO" id="GO:0050897">
    <property type="term" value="F:cobalt ion binding"/>
    <property type="evidence" value="ECO:0007005"/>
    <property type="project" value="TAIR"/>
</dbReference>
<dbReference type="GO" id="GO:0004485">
    <property type="term" value="F:methylcrotonoyl-CoA carboxylase activity"/>
    <property type="evidence" value="ECO:0007669"/>
    <property type="project" value="UniProtKB-EC"/>
</dbReference>
<dbReference type="GO" id="GO:0008270">
    <property type="term" value="F:zinc ion binding"/>
    <property type="evidence" value="ECO:0007005"/>
    <property type="project" value="TAIR"/>
</dbReference>
<dbReference type="GO" id="GO:0006552">
    <property type="term" value="P:L-leucine catabolic process"/>
    <property type="evidence" value="ECO:0000314"/>
    <property type="project" value="TAIR"/>
</dbReference>
<dbReference type="FunFam" id="3.90.226.10:FF:000004">
    <property type="entry name" value="Methylcrotonoyl-CoA carboxylase beta chain"/>
    <property type="match status" value="1"/>
</dbReference>
<dbReference type="FunFam" id="3.90.226.10:FF:000007">
    <property type="entry name" value="Methylcrotonoyl-CoA carboxylase subunit beta"/>
    <property type="match status" value="1"/>
</dbReference>
<dbReference type="Gene3D" id="3.90.226.10">
    <property type="entry name" value="2-enoyl-CoA Hydratase, Chain A, domain 1"/>
    <property type="match status" value="2"/>
</dbReference>
<dbReference type="InterPro" id="IPR034733">
    <property type="entry name" value="AcCoA_carboxyl_beta"/>
</dbReference>
<dbReference type="InterPro" id="IPR029045">
    <property type="entry name" value="ClpP/crotonase-like_dom_sf"/>
</dbReference>
<dbReference type="InterPro" id="IPR011763">
    <property type="entry name" value="COA_CT_C"/>
</dbReference>
<dbReference type="InterPro" id="IPR011762">
    <property type="entry name" value="COA_CT_N"/>
</dbReference>
<dbReference type="InterPro" id="IPR045190">
    <property type="entry name" value="MCCB/AccD1-like"/>
</dbReference>
<dbReference type="PANTHER" id="PTHR22855">
    <property type="entry name" value="ACETYL, PROPIONYL, PYRUVATE, AND GLUTACONYL CARBOXYLASE-RELATED"/>
    <property type="match status" value="1"/>
</dbReference>
<dbReference type="PANTHER" id="PTHR22855:SF13">
    <property type="entry name" value="METHYLCROTONOYL-COA CARBOXYLASE BETA CHAIN, MITOCHONDRIAL"/>
    <property type="match status" value="1"/>
</dbReference>
<dbReference type="Pfam" id="PF01039">
    <property type="entry name" value="Carboxyl_trans"/>
    <property type="match status" value="1"/>
</dbReference>
<dbReference type="SUPFAM" id="SSF52096">
    <property type="entry name" value="ClpP/crotonase"/>
    <property type="match status" value="2"/>
</dbReference>
<dbReference type="PROSITE" id="PS50989">
    <property type="entry name" value="COA_CT_CTER"/>
    <property type="match status" value="1"/>
</dbReference>
<dbReference type="PROSITE" id="PS50980">
    <property type="entry name" value="COA_CT_NTER"/>
    <property type="match status" value="1"/>
</dbReference>
<name>MCCB_ARATH</name>
<organism>
    <name type="scientific">Arabidopsis thaliana</name>
    <name type="common">Mouse-ear cress</name>
    <dbReference type="NCBI Taxonomy" id="3702"/>
    <lineage>
        <taxon>Eukaryota</taxon>
        <taxon>Viridiplantae</taxon>
        <taxon>Streptophyta</taxon>
        <taxon>Embryophyta</taxon>
        <taxon>Tracheophyta</taxon>
        <taxon>Spermatophyta</taxon>
        <taxon>Magnoliopsida</taxon>
        <taxon>eudicotyledons</taxon>
        <taxon>Gunneridae</taxon>
        <taxon>Pentapetalae</taxon>
        <taxon>rosids</taxon>
        <taxon>malvids</taxon>
        <taxon>Brassicales</taxon>
        <taxon>Brassicaceae</taxon>
        <taxon>Camelineae</taxon>
        <taxon>Arabidopsis</taxon>
    </lineage>
</organism>
<reference key="1">
    <citation type="journal article" date="2000" name="J. Biol. Chem.">
        <title>Molecular characterization of the non-biotin-containing subunit of 3-methylcrotonyl-CoA carboxylase.</title>
        <authorList>
            <person name="McKean A.L."/>
            <person name="Ke J."/>
            <person name="Song J."/>
            <person name="Che P."/>
            <person name="Achenbach S."/>
            <person name="Nikolau B.J."/>
            <person name="Wurtele E.S."/>
        </authorList>
    </citation>
    <scope>NUCLEOTIDE SEQUENCE [GENOMIC DNA / MRNA]</scope>
    <source>
        <strain>cv. Columbia</strain>
        <strain>cv. Landsberg erecta</strain>
    </source>
</reference>
<reference key="2">
    <citation type="journal article" date="1999" name="Nature">
        <title>Sequence and analysis of chromosome 4 of the plant Arabidopsis thaliana.</title>
        <authorList>
            <person name="Mayer K.F.X."/>
            <person name="Schueller C."/>
            <person name="Wambutt R."/>
            <person name="Murphy G."/>
            <person name="Volckaert G."/>
            <person name="Pohl T."/>
            <person name="Duesterhoeft A."/>
            <person name="Stiekema W."/>
            <person name="Entian K.-D."/>
            <person name="Terryn N."/>
            <person name="Harris B."/>
            <person name="Ansorge W."/>
            <person name="Brandt P."/>
            <person name="Grivell L.A."/>
            <person name="Rieger M."/>
            <person name="Weichselgartner M."/>
            <person name="de Simone V."/>
            <person name="Obermaier B."/>
            <person name="Mache R."/>
            <person name="Mueller M."/>
            <person name="Kreis M."/>
            <person name="Delseny M."/>
            <person name="Puigdomenech P."/>
            <person name="Watson M."/>
            <person name="Schmidtheini T."/>
            <person name="Reichert B."/>
            <person name="Portetelle D."/>
            <person name="Perez-Alonso M."/>
            <person name="Boutry M."/>
            <person name="Bancroft I."/>
            <person name="Vos P."/>
            <person name="Hoheisel J."/>
            <person name="Zimmermann W."/>
            <person name="Wedler H."/>
            <person name="Ridley P."/>
            <person name="Langham S.-A."/>
            <person name="McCullagh B."/>
            <person name="Bilham L."/>
            <person name="Robben J."/>
            <person name="van der Schueren J."/>
            <person name="Grymonprez B."/>
            <person name="Chuang Y.-J."/>
            <person name="Vandenbussche F."/>
            <person name="Braeken M."/>
            <person name="Weltjens I."/>
            <person name="Voet M."/>
            <person name="Bastiaens I."/>
            <person name="Aert R."/>
            <person name="Defoor E."/>
            <person name="Weitzenegger T."/>
            <person name="Bothe G."/>
            <person name="Ramsperger U."/>
            <person name="Hilbert H."/>
            <person name="Braun M."/>
            <person name="Holzer E."/>
            <person name="Brandt A."/>
            <person name="Peters S."/>
            <person name="van Staveren M."/>
            <person name="Dirkse W."/>
            <person name="Mooijman P."/>
            <person name="Klein Lankhorst R."/>
            <person name="Rose M."/>
            <person name="Hauf J."/>
            <person name="Koetter P."/>
            <person name="Berneiser S."/>
            <person name="Hempel S."/>
            <person name="Feldpausch M."/>
            <person name="Lamberth S."/>
            <person name="Van den Daele H."/>
            <person name="De Keyser A."/>
            <person name="Buysshaert C."/>
            <person name="Gielen J."/>
            <person name="Villarroel R."/>
            <person name="De Clercq R."/>
            <person name="van Montagu M."/>
            <person name="Rogers J."/>
            <person name="Cronin A."/>
            <person name="Quail M.A."/>
            <person name="Bray-Allen S."/>
            <person name="Clark L."/>
            <person name="Doggett J."/>
            <person name="Hall S."/>
            <person name="Kay M."/>
            <person name="Lennard N."/>
            <person name="McLay K."/>
            <person name="Mayes R."/>
            <person name="Pettett A."/>
            <person name="Rajandream M.A."/>
            <person name="Lyne M."/>
            <person name="Benes V."/>
            <person name="Rechmann S."/>
            <person name="Borkova D."/>
            <person name="Bloecker H."/>
            <person name="Scharfe M."/>
            <person name="Grimm M."/>
            <person name="Loehnert T.-H."/>
            <person name="Dose S."/>
            <person name="de Haan M."/>
            <person name="Maarse A.C."/>
            <person name="Schaefer M."/>
            <person name="Mueller-Auer S."/>
            <person name="Gabel C."/>
            <person name="Fuchs M."/>
            <person name="Fartmann B."/>
            <person name="Granderath K."/>
            <person name="Dauner D."/>
            <person name="Herzl A."/>
            <person name="Neumann S."/>
            <person name="Argiriou A."/>
            <person name="Vitale D."/>
            <person name="Liguori R."/>
            <person name="Piravandi E."/>
            <person name="Massenet O."/>
            <person name="Quigley F."/>
            <person name="Clabauld G."/>
            <person name="Muendlein A."/>
            <person name="Felber R."/>
            <person name="Schnabl S."/>
            <person name="Hiller R."/>
            <person name="Schmidt W."/>
            <person name="Lecharny A."/>
            <person name="Aubourg S."/>
            <person name="Chefdor F."/>
            <person name="Cooke R."/>
            <person name="Berger C."/>
            <person name="Monfort A."/>
            <person name="Casacuberta E."/>
            <person name="Gibbons T."/>
            <person name="Weber N."/>
            <person name="Vandenbol M."/>
            <person name="Bargues M."/>
            <person name="Terol J."/>
            <person name="Torres A."/>
            <person name="Perez-Perez A."/>
            <person name="Purnelle B."/>
            <person name="Bent E."/>
            <person name="Johnson S."/>
            <person name="Tacon D."/>
            <person name="Jesse T."/>
            <person name="Heijnen L."/>
            <person name="Schwarz S."/>
            <person name="Scholler P."/>
            <person name="Heber S."/>
            <person name="Francs P."/>
            <person name="Bielke C."/>
            <person name="Frishman D."/>
            <person name="Haase D."/>
            <person name="Lemcke K."/>
            <person name="Mewes H.-W."/>
            <person name="Stocker S."/>
            <person name="Zaccaria P."/>
            <person name="Bevan M."/>
            <person name="Wilson R.K."/>
            <person name="de la Bastide M."/>
            <person name="Habermann K."/>
            <person name="Parnell L."/>
            <person name="Dedhia N."/>
            <person name="Gnoj L."/>
            <person name="Schutz K."/>
            <person name="Huang E."/>
            <person name="Spiegel L."/>
            <person name="Sekhon M."/>
            <person name="Murray J."/>
            <person name="Sheet P."/>
            <person name="Cordes M."/>
            <person name="Abu-Threideh J."/>
            <person name="Stoneking T."/>
            <person name="Kalicki J."/>
            <person name="Graves T."/>
            <person name="Harmon G."/>
            <person name="Edwards J."/>
            <person name="Latreille P."/>
            <person name="Courtney L."/>
            <person name="Cloud J."/>
            <person name="Abbott A."/>
            <person name="Scott K."/>
            <person name="Johnson D."/>
            <person name="Minx P."/>
            <person name="Bentley D."/>
            <person name="Fulton B."/>
            <person name="Miller N."/>
            <person name="Greco T."/>
            <person name="Kemp K."/>
            <person name="Kramer J."/>
            <person name="Fulton L."/>
            <person name="Mardis E."/>
            <person name="Dante M."/>
            <person name="Pepin K."/>
            <person name="Hillier L.W."/>
            <person name="Nelson J."/>
            <person name="Spieth J."/>
            <person name="Ryan E."/>
            <person name="Andrews S."/>
            <person name="Geisel C."/>
            <person name="Layman D."/>
            <person name="Du H."/>
            <person name="Ali J."/>
            <person name="Berghoff A."/>
            <person name="Jones K."/>
            <person name="Drone K."/>
            <person name="Cotton M."/>
            <person name="Joshu C."/>
            <person name="Antonoiu B."/>
            <person name="Zidanic M."/>
            <person name="Strong C."/>
            <person name="Sun H."/>
            <person name="Lamar B."/>
            <person name="Yordan C."/>
            <person name="Ma P."/>
            <person name="Zhong J."/>
            <person name="Preston R."/>
            <person name="Vil D."/>
            <person name="Shekher M."/>
            <person name="Matero A."/>
            <person name="Shah R."/>
            <person name="Swaby I.K."/>
            <person name="O'Shaughnessy A."/>
            <person name="Rodriguez M."/>
            <person name="Hoffman J."/>
            <person name="Till S."/>
            <person name="Granat S."/>
            <person name="Shohdy N."/>
            <person name="Hasegawa A."/>
            <person name="Hameed A."/>
            <person name="Lodhi M."/>
            <person name="Johnson A."/>
            <person name="Chen E."/>
            <person name="Marra M.A."/>
            <person name="Martienssen R."/>
            <person name="McCombie W.R."/>
        </authorList>
    </citation>
    <scope>NUCLEOTIDE SEQUENCE [LARGE SCALE GENOMIC DNA]</scope>
    <source>
        <strain>cv. Columbia</strain>
    </source>
</reference>
<reference key="3">
    <citation type="journal article" date="2017" name="Plant J.">
        <title>Araport11: a complete reannotation of the Arabidopsis thaliana reference genome.</title>
        <authorList>
            <person name="Cheng C.Y."/>
            <person name="Krishnakumar V."/>
            <person name="Chan A.P."/>
            <person name="Thibaud-Nissen F."/>
            <person name="Schobel S."/>
            <person name="Town C.D."/>
        </authorList>
    </citation>
    <scope>GENOME REANNOTATION</scope>
    <source>
        <strain>cv. Columbia</strain>
    </source>
</reference>
<reference key="4">
    <citation type="journal article" date="2003" name="Science">
        <title>Empirical analysis of transcriptional activity in the Arabidopsis genome.</title>
        <authorList>
            <person name="Yamada K."/>
            <person name="Lim J."/>
            <person name="Dale J.M."/>
            <person name="Chen H."/>
            <person name="Shinn P."/>
            <person name="Palm C.J."/>
            <person name="Southwick A.M."/>
            <person name="Wu H.C."/>
            <person name="Kim C.J."/>
            <person name="Nguyen M."/>
            <person name="Pham P.K."/>
            <person name="Cheuk R.F."/>
            <person name="Karlin-Newmann G."/>
            <person name="Liu S.X."/>
            <person name="Lam B."/>
            <person name="Sakano H."/>
            <person name="Wu T."/>
            <person name="Yu G."/>
            <person name="Miranda M."/>
            <person name="Quach H.L."/>
            <person name="Tripp M."/>
            <person name="Chang C.H."/>
            <person name="Lee J.M."/>
            <person name="Toriumi M.J."/>
            <person name="Chan M.M."/>
            <person name="Tang C.C."/>
            <person name="Onodera C.S."/>
            <person name="Deng J.M."/>
            <person name="Akiyama K."/>
            <person name="Ansari Y."/>
            <person name="Arakawa T."/>
            <person name="Banh J."/>
            <person name="Banno F."/>
            <person name="Bowser L."/>
            <person name="Brooks S.Y."/>
            <person name="Carninci P."/>
            <person name="Chao Q."/>
            <person name="Choy N."/>
            <person name="Enju A."/>
            <person name="Goldsmith A.D."/>
            <person name="Gurjal M."/>
            <person name="Hansen N.F."/>
            <person name="Hayashizaki Y."/>
            <person name="Johnson-Hopson C."/>
            <person name="Hsuan V.W."/>
            <person name="Iida K."/>
            <person name="Karnes M."/>
            <person name="Khan S."/>
            <person name="Koesema E."/>
            <person name="Ishida J."/>
            <person name="Jiang P.X."/>
            <person name="Jones T."/>
            <person name="Kawai J."/>
            <person name="Kamiya A."/>
            <person name="Meyers C."/>
            <person name="Nakajima M."/>
            <person name="Narusaka M."/>
            <person name="Seki M."/>
            <person name="Sakurai T."/>
            <person name="Satou M."/>
            <person name="Tamse R."/>
            <person name="Vaysberg M."/>
            <person name="Wallender E.K."/>
            <person name="Wong C."/>
            <person name="Yamamura Y."/>
            <person name="Yuan S."/>
            <person name="Shinozaki K."/>
            <person name="Davis R.W."/>
            <person name="Theologis A."/>
            <person name="Ecker J.R."/>
        </authorList>
    </citation>
    <scope>NUCLEOTIDE SEQUENCE [LARGE SCALE MRNA]</scope>
    <source>
        <strain>cv. Columbia</strain>
    </source>
</reference>
<feature type="transit peptide" description="Mitochondrion" evidence="2">
    <location>
        <begin position="1"/>
        <end position="26"/>
    </location>
</feature>
<feature type="chain" id="PRO_0000000292" description="Methylcrotonoyl-CoA carboxylase beta chain, mitochondrial">
    <location>
        <begin position="27"/>
        <end position="587"/>
    </location>
</feature>
<feature type="domain" description="CoA carboxyltransferase N-terminal" evidence="3">
    <location>
        <begin position="68"/>
        <end position="324"/>
    </location>
</feature>
<feature type="domain" description="CoA carboxyltransferase C-terminal" evidence="4">
    <location>
        <begin position="333"/>
        <end position="579"/>
    </location>
</feature>
<feature type="region of interest" description="Carboxyltransferase" evidence="5">
    <location>
        <begin position="68"/>
        <end position="579"/>
    </location>
</feature>
<feature type="region of interest" description="Acyl-CoA binding" evidence="2">
    <location>
        <begin position="367"/>
        <end position="396"/>
    </location>
</feature>
<feature type="sequence conflict" description="In Ref. 4; AAK62371." evidence="6" ref="4">
    <original>P</original>
    <variation>T</variation>
    <location>
        <position position="143"/>
    </location>
</feature>
<gene>
    <name type="primary">MCCB</name>
    <name type="ordered locus">At4g34030</name>
    <name type="ORF">F17I5.220</name>
    <name type="ORF">F28A23.210</name>
</gene>
<proteinExistence type="evidence at transcript level"/>
<comment type="function">
    <text evidence="1">Carboxyltransferase subunit of the 3-methylcrotonyl-CoA carboxylase, an enzyme that catalyzes the conversion of 3-methylcrotonyl-CoA to 3-methylglutaconyl-CoA, a critical step for leucine and isovaleric acid catabolism.</text>
</comment>
<comment type="catalytic activity">
    <reaction>
        <text>3-methylbut-2-enoyl-CoA + hydrogencarbonate + ATP = 3-methyl-(2E)-glutaconyl-CoA + ADP + phosphate + H(+)</text>
        <dbReference type="Rhea" id="RHEA:13589"/>
        <dbReference type="ChEBI" id="CHEBI:15378"/>
        <dbReference type="ChEBI" id="CHEBI:17544"/>
        <dbReference type="ChEBI" id="CHEBI:30616"/>
        <dbReference type="ChEBI" id="CHEBI:43474"/>
        <dbReference type="ChEBI" id="CHEBI:57344"/>
        <dbReference type="ChEBI" id="CHEBI:57346"/>
        <dbReference type="ChEBI" id="CHEBI:456216"/>
        <dbReference type="EC" id="6.4.1.4"/>
    </reaction>
</comment>
<comment type="pathway">
    <text>Amino-acid degradation; L-leucine degradation; (S)-3-hydroxy-3-methylglutaryl-CoA from 3-isovaleryl-CoA: step 2/3.</text>
</comment>
<comment type="subunit">
    <text evidence="1">Probably a heterodimer composed of biotin-containing alpha subunits and beta subunits.</text>
</comment>
<comment type="subcellular location">
    <subcellularLocation>
        <location>Mitochondrion matrix</location>
    </subcellularLocation>
</comment>
<comment type="tissue specificity">
    <text>In roots, cotyledons, leaves, flowers, ovaries, siliques and embryos.</text>
</comment>
<comment type="miscellaneous">
    <text>Temporal and spatial accumulation of the alpha and beta subunits during development at approximately equal molar ratios.</text>
</comment>
<comment type="similarity">
    <text evidence="6">Belongs to the AccD/PCCB family.</text>
</comment>
<comment type="sequence caution" evidence="6">
    <conflict type="erroneous gene model prediction">
        <sequence resource="EMBL-CDS" id="CAA17569"/>
    </conflict>
</comment>
<comment type="sequence caution" evidence="6">
    <conflict type="erroneous gene model prediction">
        <sequence resource="EMBL-CDS" id="CAA19885"/>
    </conflict>
</comment>
<comment type="sequence caution" evidence="6">
    <conflict type="erroneous gene model prediction">
        <sequence resource="EMBL-CDS" id="CAB80120"/>
    </conflict>
</comment>